<organism>
    <name type="scientific">Homo sapiens</name>
    <name type="common">Human</name>
    <dbReference type="NCBI Taxonomy" id="9606"/>
    <lineage>
        <taxon>Eukaryota</taxon>
        <taxon>Metazoa</taxon>
        <taxon>Chordata</taxon>
        <taxon>Craniata</taxon>
        <taxon>Vertebrata</taxon>
        <taxon>Euteleostomi</taxon>
        <taxon>Mammalia</taxon>
        <taxon>Eutheria</taxon>
        <taxon>Euarchontoglires</taxon>
        <taxon>Primates</taxon>
        <taxon>Haplorrhini</taxon>
        <taxon>Catarrhini</taxon>
        <taxon>Hominidae</taxon>
        <taxon>Homo</taxon>
    </lineage>
</organism>
<proteinExistence type="evidence at protein level"/>
<evidence type="ECO:0000250" key="1">
    <source>
        <dbReference type="UniProtKB" id="P33309"/>
    </source>
</evidence>
<evidence type="ECO:0000269" key="2">
    <source>
    </source>
</evidence>
<evidence type="ECO:0000269" key="3">
    <source>
    </source>
</evidence>
<evidence type="ECO:0000269" key="4">
    <source>
    </source>
</evidence>
<evidence type="ECO:0000269" key="5">
    <source>
    </source>
</evidence>
<evidence type="ECO:0000269" key="6">
    <source>
    </source>
</evidence>
<evidence type="ECO:0000269" key="7">
    <source>
    </source>
</evidence>
<evidence type="ECO:0000269" key="8">
    <source>
    </source>
</evidence>
<evidence type="ECO:0000269" key="9">
    <source>
    </source>
</evidence>
<evidence type="ECO:0000269" key="10">
    <source>
    </source>
</evidence>
<evidence type="ECO:0000269" key="11">
    <source ref="2"/>
</evidence>
<evidence type="ECO:0000303" key="12">
    <source>
    </source>
</evidence>
<evidence type="ECO:0000303" key="13">
    <source>
    </source>
</evidence>
<evidence type="ECO:0000303" key="14">
    <source>
    </source>
</evidence>
<evidence type="ECO:0000303" key="15">
    <source>
    </source>
</evidence>
<evidence type="ECO:0000305" key="16"/>
<evidence type="ECO:0000305" key="17">
    <source>
    </source>
</evidence>
<evidence type="ECO:0000312" key="18">
    <source>
        <dbReference type="HGNC" id="HGNC:8829"/>
    </source>
</evidence>
<evidence type="ECO:0007744" key="19">
    <source>
        <dbReference type="PDB" id="5LZW"/>
    </source>
</evidence>
<evidence type="ECO:0007744" key="20">
    <source>
        <dbReference type="PDB" id="5LZX"/>
    </source>
</evidence>
<evidence type="ECO:0007744" key="21">
    <source>
        <dbReference type="PDB" id="5LZY"/>
    </source>
</evidence>
<evidence type="ECO:0007744" key="22">
    <source>
        <dbReference type="PDB" id="5LZZ"/>
    </source>
</evidence>
<evidence type="ECO:0007744" key="23">
    <source>
    </source>
</evidence>
<evidence type="ECO:0007744" key="24">
    <source>
    </source>
</evidence>
<evidence type="ECO:0007744" key="25">
    <source>
    </source>
</evidence>
<evidence type="ECO:0007744" key="26">
    <source>
    </source>
</evidence>
<evidence type="ECO:0007744" key="27">
    <source>
    </source>
</evidence>
<evidence type="ECO:0007744" key="28">
    <source>
    </source>
</evidence>
<evidence type="ECO:0007829" key="29">
    <source>
        <dbReference type="PDB" id="5EO3"/>
    </source>
</evidence>
<keyword id="KW-0002">3D-structure</keyword>
<keyword id="KW-0131">Cell cycle</keyword>
<keyword id="KW-0132">Cell division</keyword>
<keyword id="KW-0963">Cytoplasm</keyword>
<keyword id="KW-1017">Isopeptide bond</keyword>
<keyword id="KW-0479">Metal-binding</keyword>
<keyword id="KW-0597">Phosphoprotein</keyword>
<keyword id="KW-1267">Proteomics identification</keyword>
<keyword id="KW-1185">Reference proteome</keyword>
<keyword id="KW-0810">Translation regulation</keyword>
<keyword id="KW-0832">Ubl conjugation</keyword>
<name>PELO_HUMAN</name>
<gene>
    <name evidence="13 18" type="primary">PELO</name>
    <name evidence="12" type="ORF">CGI-17</name>
</gene>
<sequence>MKLVRKNIEKDNAGQVTLVPEEPEDMWHTYNLVQVGDSLRASTIRKVQTESSTGSVGSNRVRTTLTLCVEAIDFDSQACQLRVKGTNIQENEYVKMGAYHTIELEPNRQFTLAKKQWDSVVLERIEQACDPAWSADVAAVVMQEGLAHICLVTPSMTLTRAKVEVNIPRKRKGNCSQHDRALERFYEQVVQAIQRHIHFDVVKCILVASPGFVREQFCDYLFQQAVKTDNKLLLENRSKFLQVHASSGHKYSLKEALCDPTVASRLSDTKAAGEVKALDDFYKMLQHEPDRAFYGLKQVEKANEAMAIDTLLISDELFRHQDVATRSRYVRLVDSVKENAGTVRIFSSLHVSGEQLSQLTGVAAILRFPVPELSDQEGDSSSEED</sequence>
<reference key="1">
    <citation type="journal article" date="2000" name="Cytogenet. Cell Genet.">
        <title>Molecular cloning, expression and chromosome location of the human pelota gene PELO.</title>
        <authorList>
            <person name="Shamsadin R."/>
            <person name="Adham I.M."/>
            <person name="von Beust G."/>
            <person name="Engel W."/>
        </authorList>
    </citation>
    <scope>NUCLEOTIDE SEQUENCE [MRNA]</scope>
    <scope>TISSUE SPECIFICITY</scope>
    <scope>VARIANT MET-221</scope>
    <source>
        <tissue>Testis</tissue>
    </source>
</reference>
<reference key="2">
    <citation type="submission" date="2002-06" db="EMBL/GenBank/DDBJ databases">
        <title>Gene structure prediction and evidence of alternative splicing in the human pelota gene.</title>
        <authorList>
            <person name="Shamsadin R."/>
        </authorList>
    </citation>
    <scope>NUCLEOTIDE SEQUENCE [GENOMIC DNA]</scope>
    <scope>VARIANT MET-221</scope>
</reference>
<reference key="3">
    <citation type="journal article" date="2000" name="Genome Res.">
        <title>Identification of novel human genes evolutionarily conserved in Caenorhabditis elegans by comparative proteomics.</title>
        <authorList>
            <person name="Lai C.-H."/>
            <person name="Chou C.-Y."/>
            <person name="Ch'ang L.-Y."/>
            <person name="Liu C.-S."/>
            <person name="Lin W.-C."/>
        </authorList>
    </citation>
    <scope>NUCLEOTIDE SEQUENCE [LARGE SCALE MRNA]</scope>
    <scope>VARIANT MET-221</scope>
</reference>
<reference key="4">
    <citation type="journal article" date="2004" name="Nature">
        <title>The DNA sequence and comparative analysis of human chromosome 5.</title>
        <authorList>
            <person name="Schmutz J."/>
            <person name="Martin J."/>
            <person name="Terry A."/>
            <person name="Couronne O."/>
            <person name="Grimwood J."/>
            <person name="Lowry S."/>
            <person name="Gordon L.A."/>
            <person name="Scott D."/>
            <person name="Xie G."/>
            <person name="Huang W."/>
            <person name="Hellsten U."/>
            <person name="Tran-Gyamfi M."/>
            <person name="She X."/>
            <person name="Prabhakar S."/>
            <person name="Aerts A."/>
            <person name="Altherr M."/>
            <person name="Bajorek E."/>
            <person name="Black S."/>
            <person name="Branscomb E."/>
            <person name="Caoile C."/>
            <person name="Challacombe J.F."/>
            <person name="Chan Y.M."/>
            <person name="Denys M."/>
            <person name="Detter J.C."/>
            <person name="Escobar J."/>
            <person name="Flowers D."/>
            <person name="Fotopulos D."/>
            <person name="Glavina T."/>
            <person name="Gomez M."/>
            <person name="Gonzales E."/>
            <person name="Goodstein D."/>
            <person name="Grigoriev I."/>
            <person name="Groza M."/>
            <person name="Hammon N."/>
            <person name="Hawkins T."/>
            <person name="Haydu L."/>
            <person name="Israni S."/>
            <person name="Jett J."/>
            <person name="Kadner K."/>
            <person name="Kimball H."/>
            <person name="Kobayashi A."/>
            <person name="Lopez F."/>
            <person name="Lou Y."/>
            <person name="Martinez D."/>
            <person name="Medina C."/>
            <person name="Morgan J."/>
            <person name="Nandkeshwar R."/>
            <person name="Noonan J.P."/>
            <person name="Pitluck S."/>
            <person name="Pollard M."/>
            <person name="Predki P."/>
            <person name="Priest J."/>
            <person name="Ramirez L."/>
            <person name="Retterer J."/>
            <person name="Rodriguez A."/>
            <person name="Rogers S."/>
            <person name="Salamov A."/>
            <person name="Salazar A."/>
            <person name="Thayer N."/>
            <person name="Tice H."/>
            <person name="Tsai M."/>
            <person name="Ustaszewska A."/>
            <person name="Vo N."/>
            <person name="Wheeler J."/>
            <person name="Wu K."/>
            <person name="Yang J."/>
            <person name="Dickson M."/>
            <person name="Cheng J.-F."/>
            <person name="Eichler E.E."/>
            <person name="Olsen A."/>
            <person name="Pennacchio L.A."/>
            <person name="Rokhsar D.S."/>
            <person name="Richardson P."/>
            <person name="Lucas S.M."/>
            <person name="Myers R.M."/>
            <person name="Rubin E.M."/>
        </authorList>
    </citation>
    <scope>NUCLEOTIDE SEQUENCE [LARGE SCALE GENOMIC DNA]</scope>
</reference>
<reference key="5">
    <citation type="journal article" date="2004" name="Genome Res.">
        <title>The status, quality, and expansion of the NIH full-length cDNA project: the Mammalian Gene Collection (MGC).</title>
        <authorList>
            <consortium name="The MGC Project Team"/>
        </authorList>
    </citation>
    <scope>NUCLEOTIDE SEQUENCE [LARGE SCALE MRNA]</scope>
    <scope>VARIANT MET-221</scope>
    <source>
        <tissue>Brain</tissue>
        <tissue>Skin</tissue>
        <tissue>Uterus</tissue>
    </source>
</reference>
<reference key="6">
    <citation type="journal article" date="2008" name="J. Proteome Res.">
        <title>Phosphoproteome of resting human platelets.</title>
        <authorList>
            <person name="Zahedi R.P."/>
            <person name="Lewandrowski U."/>
            <person name="Wiesner J."/>
            <person name="Wortelkamp S."/>
            <person name="Moebius J."/>
            <person name="Schuetz C."/>
            <person name="Walter U."/>
            <person name="Gambaryan S."/>
            <person name="Sickmann A."/>
        </authorList>
    </citation>
    <scope>PHOSPHORYLATION [LARGE SCALE ANALYSIS] AT SER-374; SER-380; SER-381 AND SER-382</scope>
    <scope>IDENTIFICATION BY MASS SPECTROMETRY [LARGE SCALE ANALYSIS]</scope>
    <source>
        <tissue>Platelet</tissue>
    </source>
</reference>
<reference key="7">
    <citation type="journal article" date="2008" name="Proc. Natl. Acad. Sci. U.S.A.">
        <title>A quantitative atlas of mitotic phosphorylation.</title>
        <authorList>
            <person name="Dephoure N."/>
            <person name="Zhou C."/>
            <person name="Villen J."/>
            <person name="Beausoleil S.A."/>
            <person name="Bakalarski C.E."/>
            <person name="Elledge S.J."/>
            <person name="Gygi S.P."/>
        </authorList>
    </citation>
    <scope>IDENTIFICATION BY MASS SPECTROMETRY [LARGE SCALE ANALYSIS]</scope>
    <source>
        <tissue>Cervix carcinoma</tissue>
    </source>
</reference>
<reference key="8">
    <citation type="journal article" date="2009" name="Sci. Signal.">
        <title>Quantitative phosphoproteomic analysis of T cell receptor signaling reveals system-wide modulation of protein-protein interactions.</title>
        <authorList>
            <person name="Mayya V."/>
            <person name="Lundgren D.H."/>
            <person name="Hwang S.-I."/>
            <person name="Rezaul K."/>
            <person name="Wu L."/>
            <person name="Eng J.K."/>
            <person name="Rodionov V."/>
            <person name="Han D.K."/>
        </authorList>
    </citation>
    <scope>PHOSPHORYLATION [LARGE SCALE ANALYSIS] AT SER-374</scope>
    <scope>IDENTIFICATION BY MASS SPECTROMETRY [LARGE SCALE ANALYSIS]</scope>
    <source>
        <tissue>Leukemic T-cell</tissue>
    </source>
</reference>
<reference key="9">
    <citation type="journal article" date="2010" name="Sci. Signal.">
        <title>Quantitative phosphoproteomics reveals widespread full phosphorylation site occupancy during mitosis.</title>
        <authorList>
            <person name="Olsen J.V."/>
            <person name="Vermeulen M."/>
            <person name="Santamaria A."/>
            <person name="Kumar C."/>
            <person name="Miller M.L."/>
            <person name="Jensen L.J."/>
            <person name="Gnad F."/>
            <person name="Cox J."/>
            <person name="Jensen T.S."/>
            <person name="Nigg E.A."/>
            <person name="Brunak S."/>
            <person name="Mann M."/>
        </authorList>
    </citation>
    <scope>PHOSPHORYLATION [LARGE SCALE ANALYSIS] AT SER-374 AND SER-381</scope>
    <scope>IDENTIFICATION BY MASS SPECTROMETRY [LARGE SCALE ANALYSIS]</scope>
    <source>
        <tissue>Cervix carcinoma</tissue>
    </source>
</reference>
<reference key="10">
    <citation type="journal article" date="2011" name="BMC Syst. Biol.">
        <title>Initial characterization of the human central proteome.</title>
        <authorList>
            <person name="Burkard T.R."/>
            <person name="Planyavsky M."/>
            <person name="Kaupe I."/>
            <person name="Breitwieser F.P."/>
            <person name="Buerckstuemmer T."/>
            <person name="Bennett K.L."/>
            <person name="Superti-Furga G."/>
            <person name="Colinge J."/>
        </authorList>
    </citation>
    <scope>IDENTIFICATION BY MASS SPECTROMETRY [LARGE SCALE ANALYSIS]</scope>
</reference>
<reference key="11">
    <citation type="journal article" date="2011" name="EMBO J.">
        <title>Dissociation by Pelota, Hbs1 and ABCE1 of mammalian vacant 80S ribosomes and stalled elongation complexes.</title>
        <authorList>
            <person name="Pisareva V.P."/>
            <person name="Skabkin M.A."/>
            <person name="Hellen C.U."/>
            <person name="Pestova T.V."/>
            <person name="Pisarev A.V."/>
        </authorList>
    </citation>
    <scope>FUNCTION</scope>
    <scope>SUBCELLULAR LOCATION</scope>
</reference>
<reference key="12">
    <citation type="journal article" date="2011" name="Sci. Signal.">
        <title>System-wide temporal characterization of the proteome and phosphoproteome of human embryonic stem cell differentiation.</title>
        <authorList>
            <person name="Rigbolt K.T."/>
            <person name="Prokhorova T.A."/>
            <person name="Akimov V."/>
            <person name="Henningsen J."/>
            <person name="Johansen P.T."/>
            <person name="Kratchmarova I."/>
            <person name="Kassem M."/>
            <person name="Mann M."/>
            <person name="Olsen J.V."/>
            <person name="Blagoev B."/>
        </authorList>
    </citation>
    <scope>PHOSPHORYLATION [LARGE SCALE ANALYSIS] AT SER-374; SER-380; SER-381 AND SER-382</scope>
    <scope>IDENTIFICATION BY MASS SPECTROMETRY [LARGE SCALE ANALYSIS]</scope>
</reference>
<reference key="13">
    <citation type="journal article" date="2013" name="J. Biol. Chem.">
        <title>The Hbs1-Dom34 protein complex functions in non-stop mRNA decay in mammalian cells.</title>
        <authorList>
            <person name="Saito S."/>
            <person name="Hosoda N."/>
            <person name="Hoshino S."/>
        </authorList>
    </citation>
    <scope>FUNCTION</scope>
</reference>
<reference key="14">
    <citation type="journal article" date="2014" name="J. Proteomics">
        <title>An enzyme assisted RP-RPLC approach for in-depth analysis of human liver phosphoproteome.</title>
        <authorList>
            <person name="Bian Y."/>
            <person name="Song C."/>
            <person name="Cheng K."/>
            <person name="Dong M."/>
            <person name="Wang F."/>
            <person name="Huang J."/>
            <person name="Sun D."/>
            <person name="Wang L."/>
            <person name="Ye M."/>
            <person name="Zou H."/>
        </authorList>
    </citation>
    <scope>PHOSPHORYLATION [LARGE SCALE ANALYSIS] AT SER-374</scope>
    <scope>IDENTIFICATION BY MASS SPECTROMETRY [LARGE SCALE ANALYSIS]</scope>
    <source>
        <tissue>Liver</tissue>
    </source>
</reference>
<reference key="15">
    <citation type="journal article" date="2016" name="FEBS Lett.">
        <title>Conserved functions of human Pelota in mRNA quality control of nonstop mRNA.</title>
        <authorList>
            <person name="Ikeuchi K."/>
            <person name="Yazaki E."/>
            <person name="Kudo K."/>
            <person name="Inada T."/>
        </authorList>
    </citation>
    <scope>FUNCTION</scope>
    <scope>MUTAGENESIS OF LYS-2 AND ARG-45</scope>
</reference>
<reference key="16">
    <citation type="journal article" date="2017" name="Nat. Struct. Mol. Biol.">
        <title>Site-specific mapping of the human SUMO proteome reveals co-modification with phosphorylation.</title>
        <authorList>
            <person name="Hendriks I.A."/>
            <person name="Lyon D."/>
            <person name="Young C."/>
            <person name="Jensen L.J."/>
            <person name="Vertegaal A.C."/>
            <person name="Nielsen M.L."/>
        </authorList>
    </citation>
    <scope>SUMOYLATION [LARGE SCALE ANALYSIS] AT LYS-162</scope>
    <scope>IDENTIFICATION BY MASS SPECTROMETRY [LARGE SCALE ANALYSIS]</scope>
</reference>
<reference key="17">
    <citation type="journal article" date="2018" name="Cell Metab.">
        <title>Ubiquitination of ABCE1 by NOT4 in Response to Mitochondrial Damage Links Co-translational Quality Control to PINK1-Directed Mitophagy.</title>
        <authorList>
            <person name="Wu Z."/>
            <person name="Wang Y."/>
            <person name="Lim J."/>
            <person name="Liu B."/>
            <person name="Li Y."/>
            <person name="Vartak R."/>
            <person name="Stankiewicz T."/>
            <person name="Montgomery S."/>
            <person name="Lu B."/>
        </authorList>
    </citation>
    <scope>FUNCTION</scope>
    <scope>INTERACTION WITH PINK1; ABCE1 AND CNOT4</scope>
</reference>
<reference key="18">
    <citation type="journal article" date="2020" name="Mol. Cell">
        <title>Extraction of mRNA from stalled ribosomes by the Ski complex.</title>
        <authorList>
            <person name="Zinoviev A."/>
            <person name="Ayupov R.K."/>
            <person name="Abaeva I.S."/>
            <person name="Hellen C.U.T."/>
            <person name="Pestova T.V."/>
        </authorList>
    </citation>
    <scope>FUNCTION</scope>
</reference>
<reference key="19">
    <citation type="submission" date="2005-11" db="PDB data bank">
        <title>Solution structure of the C-terminal domain of the human pelota homolog (CGI-17).</title>
        <authorList>
            <consortium name="RIKEN structural genomics initiative (RSGI)"/>
        </authorList>
    </citation>
    <scope>STRUCTURE BY NMR OF 261-371</scope>
</reference>
<reference evidence="19 20 21 22" key="20">
    <citation type="journal article" date="2016" name="Cell">
        <title>Decoding mammalian ribosome-mRNA states by translational GTPase complexes.</title>
        <authorList>
            <person name="Shao S."/>
            <person name="Murray J."/>
            <person name="Brown A."/>
            <person name="Taunton J."/>
            <person name="Ramakrishnan V."/>
            <person name="Hegde R.S."/>
        </authorList>
    </citation>
    <scope>STRUCTURE BY ELECTRON MICROSCOPY (3.47 ANGSTROMS) IN COMPLEX WITH HBS1L AND STALLED RIBOSOME</scope>
    <scope>FUNCTION</scope>
    <scope>IDENTIFICATION IN THE PELOTA-HBS1L COMPLEX</scope>
</reference>
<feature type="chain" id="PRO_0000143188" description="Protein pelota homolog">
    <location>
        <begin position="1"/>
        <end position="385"/>
    </location>
</feature>
<feature type="modified residue" description="Phosphoserine" evidence="23 24 25 26 27">
    <location>
        <position position="374"/>
    </location>
</feature>
<feature type="modified residue" description="Phosphoserine" evidence="23 26">
    <location>
        <position position="380"/>
    </location>
</feature>
<feature type="modified residue" description="Phosphoserine" evidence="23 25 26">
    <location>
        <position position="381"/>
    </location>
</feature>
<feature type="modified residue" description="Phosphoserine" evidence="23 26">
    <location>
        <position position="382"/>
    </location>
</feature>
<feature type="cross-link" description="Glycyl lysine isopeptide (Lys-Gly) (interchain with G-Cter in SUMO2)" evidence="28">
    <location>
        <position position="162"/>
    </location>
</feature>
<feature type="sequence variant" id="VAR_019777" description="In dbSNP:rs1499280." evidence="2 3 4 11">
    <original>L</original>
    <variation>M</variation>
    <location>
        <position position="221"/>
    </location>
</feature>
<feature type="mutagenesis site" description="Abolished ability to rescue stalled ribosomes." evidence="7">
    <original>K</original>
    <variation>A</variation>
    <location>
        <position position="2"/>
    </location>
</feature>
<feature type="mutagenesis site" description="Abolished ability to rescue stalled ribosomes." evidence="7">
    <original>R</original>
    <variation>A</variation>
    <location>
        <position position="45"/>
    </location>
</feature>
<feature type="sequence conflict" description="In Ref. 1; AAG22574/AAG22575." evidence="16" ref="1">
    <original>A</original>
    <variation>D</variation>
    <location>
        <position position="135"/>
    </location>
</feature>
<feature type="sequence conflict" description="In Ref. 3; AAD27726." evidence="16" ref="3">
    <original>E</original>
    <variation>G</variation>
    <location>
        <position position="235"/>
    </location>
</feature>
<feature type="sequence conflict" description="In Ref. 3; AAD27726." evidence="16" ref="3">
    <original>AS</original>
    <variation>LA</variation>
    <location>
        <begin position="263"/>
        <end position="264"/>
    </location>
</feature>
<feature type="sequence conflict" description="In Ref. 3; AAD27726." evidence="16" ref="3">
    <original>F</original>
    <variation>S</variation>
    <location>
        <position position="281"/>
    </location>
</feature>
<feature type="sequence conflict" description="In Ref. 1; AAG22574/AAG22575." evidence="16" ref="1">
    <original>S</original>
    <variation>Y</variation>
    <location>
        <position position="352"/>
    </location>
</feature>
<feature type="helix" evidence="29">
    <location>
        <begin position="273"/>
        <end position="287"/>
    </location>
</feature>
<feature type="helix" evidence="29">
    <location>
        <begin position="289"/>
        <end position="291"/>
    </location>
</feature>
<feature type="strand" evidence="29">
    <location>
        <begin position="292"/>
        <end position="295"/>
    </location>
</feature>
<feature type="helix" evidence="29">
    <location>
        <begin position="296"/>
        <end position="304"/>
    </location>
</feature>
<feature type="strand" evidence="29">
    <location>
        <begin position="308"/>
        <end position="314"/>
    </location>
</feature>
<feature type="helix" evidence="29">
    <location>
        <begin position="315"/>
        <end position="318"/>
    </location>
</feature>
<feature type="helix" evidence="29">
    <location>
        <begin position="323"/>
        <end position="338"/>
    </location>
</feature>
<feature type="strand" evidence="29">
    <location>
        <begin position="342"/>
        <end position="346"/>
    </location>
</feature>
<feature type="strand" evidence="29">
    <location>
        <begin position="348"/>
        <end position="350"/>
    </location>
</feature>
<feature type="helix" evidence="29">
    <location>
        <begin position="351"/>
        <end position="358"/>
    </location>
</feature>
<feature type="turn" evidence="29">
    <location>
        <begin position="359"/>
        <end position="361"/>
    </location>
</feature>
<feature type="strand" evidence="29">
    <location>
        <begin position="362"/>
        <end position="368"/>
    </location>
</feature>
<comment type="function">
    <text evidence="5 6 7 8 9 10">Component of the Pelota-HBS1L complex, a complex that recognizes stalled ribosomes and triggers the No-Go Decay (NGD) pathway (PubMed:21448132, PubMed:23667253, PubMed:27543824, PubMed:27863242). In the Pelota-HBS1L complex, PELO recognizes ribosomes stalled at the 3' end of an mRNA and engages stalled ribosomes by destabilizing mRNA in the mRNA channel (PubMed:27543824, PubMed:27863242). Following mRNA extraction from stalled ribosomes by the SKI complex, the Pelota-HBS1L complex promotes recruitment of ABCE1, which drives the disassembly of stalled ribosomes, followed by degradation of damaged mRNAs as part of the NGD pathway (PubMed:21448132, PubMed:32006463). As part of the PINK1-regulated signaling, upon mitochondrial damage is recruited to the ribosome/mRNA-ribonucleoprotein complex associated to mitochondrial outer membrane thereby enabling the recruitment of autophagy receptors and induction of mitophagy (PubMed:29861391).</text>
</comment>
<comment type="cofactor">
    <cofactor evidence="1">
        <name>a divalent metal cation</name>
        <dbReference type="ChEBI" id="CHEBI:60240"/>
    </cofactor>
</comment>
<comment type="subunit">
    <text evidence="8 9">Component of the Pelota-HBS1L complex, also named Dom34-Hbs1 complex, composed of PELO and HBS1L (PubMed:27863242). Interacts with PINK1 (PubMed:29861391). Interacts with ABCE1 (PubMed:29861391). Interacts with CNOT4 (PubMed:29861391).</text>
</comment>
<comment type="interaction">
    <interactant intactId="EBI-1043580">
        <id>Q9BRX2</id>
    </interactant>
    <interactant intactId="EBI-747185">
        <id>O95817</id>
        <label>BAG3</label>
    </interactant>
    <organismsDiffer>false</organismsDiffer>
    <experiments>3</experiments>
</comment>
<comment type="interaction">
    <interactant intactId="EBI-1043580">
        <id>Q9BRX2</id>
    </interactant>
    <interactant intactId="EBI-1176455">
        <id>P63172</id>
        <label>DYNLT1</label>
    </interactant>
    <organismsDiffer>false</organismsDiffer>
    <experiments>3</experiments>
</comment>
<comment type="interaction">
    <interactant intactId="EBI-1043580">
        <id>Q9BRX2</id>
    </interactant>
    <interactant intactId="EBI-366632">
        <id>O75821</id>
        <label>EIF3G</label>
    </interactant>
    <organismsDiffer>false</organismsDiffer>
    <experiments>6</experiments>
</comment>
<comment type="interaction">
    <interactant intactId="EBI-1043580">
        <id>Q9BRX2</id>
    </interactant>
    <interactant intactId="EBI-25852941">
        <id>P11362-2</id>
        <label>FGFR1</label>
    </interactant>
    <organismsDiffer>false</organismsDiffer>
    <experiments>3</experiments>
</comment>
<comment type="interaction">
    <interactant intactId="EBI-1043580">
        <id>Q9BRX2</id>
    </interactant>
    <interactant intactId="EBI-9641086">
        <id>P21333-2</id>
        <label>FLNA</label>
    </interactant>
    <organismsDiffer>false</organismsDiffer>
    <experiments>6</experiments>
</comment>
<comment type="interaction">
    <interactant intactId="EBI-1043580">
        <id>Q9BRX2</id>
    </interactant>
    <interactant intactId="EBI-357001">
        <id>O00165</id>
        <label>HAX1</label>
    </interactant>
    <organismsDiffer>false</organismsDiffer>
    <experiments>7</experiments>
</comment>
<comment type="interaction">
    <interactant intactId="EBI-1043580">
        <id>Q9BRX2</id>
    </interactant>
    <interactant intactId="EBI-10297269">
        <id>D9YZV0</id>
        <label>HBS1L</label>
    </interactant>
    <organismsDiffer>false</organismsDiffer>
    <experiments>3</experiments>
</comment>
<comment type="interaction">
    <interactant intactId="EBI-1043580">
        <id>Q9BRX2</id>
    </interactant>
    <interactant intactId="EBI-2868258">
        <id>Q9Y450</id>
        <label>HBS1L</label>
    </interactant>
    <organismsDiffer>false</organismsDiffer>
    <experiments>4</experiments>
</comment>
<comment type="interaction">
    <interactant intactId="EBI-1043580">
        <id>Q9BRX2</id>
    </interactant>
    <interactant intactId="EBI-352682">
        <id>P04792</id>
        <label>HSPB1</label>
    </interactant>
    <organismsDiffer>false</organismsDiffer>
    <experiments>4</experiments>
</comment>
<comment type="interaction">
    <interactant intactId="EBI-1043580">
        <id>Q9BRX2</id>
    </interactant>
    <interactant intactId="EBI-466029">
        <id>P42858</id>
        <label>HTT</label>
    </interactant>
    <organismsDiffer>false</organismsDiffer>
    <experiments>12</experiments>
</comment>
<comment type="interaction">
    <interactant intactId="EBI-1043580">
        <id>Q9BRX2</id>
    </interactant>
    <interactant intactId="EBI-1035358">
        <id>P05362</id>
        <label>ICAM1</label>
    </interactant>
    <organismsDiffer>false</organismsDiffer>
    <experiments>3</experiments>
</comment>
<comment type="interaction">
    <interactant intactId="EBI-1043580">
        <id>Q9BRX2</id>
    </interactant>
    <interactant intactId="EBI-399080">
        <id>Q92993</id>
        <label>KAT5</label>
    </interactant>
    <organismsDiffer>false</organismsDiffer>
    <experiments>3</experiments>
</comment>
<comment type="interaction">
    <interactant intactId="EBI-1043580">
        <id>Q9BRX2</id>
    </interactant>
    <interactant intactId="EBI-10975473">
        <id>O60333-2</id>
        <label>KIF1B</label>
    </interactant>
    <organismsDiffer>false</organismsDiffer>
    <experiments>3</experiments>
</comment>
<comment type="interaction">
    <interactant intactId="EBI-1043580">
        <id>Q9BRX2</id>
    </interactant>
    <interactant intactId="EBI-10176379">
        <id>P59991</id>
        <label>KRTAP12-2</label>
    </interactant>
    <organismsDiffer>false</organismsDiffer>
    <experiments>3</experiments>
</comment>
<comment type="interaction">
    <interactant intactId="EBI-1043580">
        <id>Q9BRX2</id>
    </interactant>
    <interactant intactId="EBI-11742507">
        <id>Q8TAP4-4</id>
        <label>LMO3</label>
    </interactant>
    <organismsDiffer>false</organismsDiffer>
    <experiments>9</experiments>
</comment>
<comment type="interaction">
    <interactant intactId="EBI-1043580">
        <id>Q9BRX2</id>
    </interactant>
    <interactant intactId="EBI-2798728">
        <id>P61968</id>
        <label>LMO4</label>
    </interactant>
    <organismsDiffer>false</organismsDiffer>
    <experiments>3</experiments>
</comment>
<comment type="interaction">
    <interactant intactId="EBI-1043580">
        <id>Q9BRX2</id>
    </interactant>
    <interactant intactId="EBI-1050743">
        <id>P31153</id>
        <label>MAT2A</label>
    </interactant>
    <organismsDiffer>false</organismsDiffer>
    <experiments>3</experiments>
</comment>
<comment type="interaction">
    <interactant intactId="EBI-1043580">
        <id>Q9BRX2</id>
    </interactant>
    <interactant intactId="EBI-16439278">
        <id>Q6FHY5</id>
        <label>MEOX2</label>
    </interactant>
    <organismsDiffer>false</organismsDiffer>
    <experiments>3</experiments>
</comment>
<comment type="interaction">
    <interactant intactId="EBI-1043580">
        <id>Q9BRX2</id>
    </interactant>
    <interactant intactId="EBI-709754">
        <id>Q9HB07</id>
        <label>MYG1</label>
    </interactant>
    <organismsDiffer>false</organismsDiffer>
    <experiments>3</experiments>
</comment>
<comment type="interaction">
    <interactant intactId="EBI-1043580">
        <id>Q9BRX2</id>
    </interactant>
    <interactant intactId="EBI-475646">
        <id>P07196</id>
        <label>NEFL</label>
    </interactant>
    <organismsDiffer>false</organismsDiffer>
    <experiments>3</experiments>
</comment>
<comment type="interaction">
    <interactant intactId="EBI-1043580">
        <id>Q9BRX2</id>
    </interactant>
    <interactant intactId="EBI-25884072">
        <id>P62937-2</id>
        <label>PPIA</label>
    </interactant>
    <organismsDiffer>false</organismsDiffer>
    <experiments>3</experiments>
</comment>
<comment type="interaction">
    <interactant intactId="EBI-1043580">
        <id>Q9BRX2</id>
    </interactant>
    <interactant intactId="EBI-1383528">
        <id>P17252</id>
        <label>PRKCA</label>
    </interactant>
    <organismsDiffer>false</organismsDiffer>
    <experiments>3</experiments>
</comment>
<comment type="interaction">
    <interactant intactId="EBI-1043580">
        <id>Q9BRX2</id>
    </interactant>
    <interactant intactId="EBI-749195">
        <id>P60891</id>
        <label>PRPS1</label>
    </interactant>
    <organismsDiffer>false</organismsDiffer>
    <experiments>3</experiments>
</comment>
<comment type="interaction">
    <interactant intactId="EBI-1043580">
        <id>Q9BRX2</id>
    </interactant>
    <interactant intactId="EBI-9090795">
        <id>Q15047-2</id>
        <label>SETDB1</label>
    </interactant>
    <organismsDiffer>false</organismsDiffer>
    <experiments>3</experiments>
</comment>
<comment type="interaction">
    <interactant intactId="EBI-1043580">
        <id>Q9BRX2</id>
    </interactant>
    <interactant intactId="EBI-2371213">
        <id>P78539</id>
        <label>SRPX</label>
    </interactant>
    <organismsDiffer>false</organismsDiffer>
    <experiments>6</experiments>
</comment>
<comment type="interaction">
    <interactant intactId="EBI-1043580">
        <id>Q9BRX2</id>
    </interactant>
    <interactant intactId="EBI-720609">
        <id>O76024</id>
        <label>WFS1</label>
    </interactant>
    <organismsDiffer>false</organismsDiffer>
    <experiments>3</experiments>
</comment>
<comment type="interaction">
    <interactant intactId="EBI-1043580">
        <id>Q9BRX2</id>
    </interactant>
    <interactant intactId="EBI-359832">
        <id>P61981</id>
        <label>YWHAG</label>
    </interactant>
    <organismsDiffer>false</organismsDiffer>
    <experiments>3</experiments>
</comment>
<comment type="subcellular location">
    <subcellularLocation>
        <location evidence="17">Cytoplasm</location>
    </subcellularLocation>
</comment>
<comment type="tissue specificity">
    <text evidence="3">Ubiquitously expressed.</text>
</comment>
<comment type="similarity">
    <text evidence="16">Belongs to the eukaryotic release factor 1 family. Pelota subfamily.</text>
</comment>
<dbReference type="EMBL" id="AF139828">
    <property type="protein sequence ID" value="AAG22574.1"/>
    <property type="molecule type" value="mRNA"/>
</dbReference>
<dbReference type="EMBL" id="AF143952">
    <property type="protein sequence ID" value="AAG22575.1"/>
    <property type="molecule type" value="Genomic_DNA"/>
</dbReference>
<dbReference type="EMBL" id="AY117399">
    <property type="protein sequence ID" value="AAM89414.1"/>
    <property type="molecule type" value="mRNA"/>
</dbReference>
<dbReference type="EMBL" id="AF132951">
    <property type="protein sequence ID" value="AAD27726.1"/>
    <property type="molecule type" value="mRNA"/>
</dbReference>
<dbReference type="EMBL" id="AC026230">
    <property type="status" value="NOT_ANNOTATED_CDS"/>
    <property type="molecule type" value="Genomic_DNA"/>
</dbReference>
<dbReference type="EMBL" id="BC005889">
    <property type="protein sequence ID" value="AAH05889.1"/>
    <property type="molecule type" value="mRNA"/>
</dbReference>
<dbReference type="EMBL" id="BC007249">
    <property type="protein sequence ID" value="AAH07249.1"/>
    <property type="molecule type" value="mRNA"/>
</dbReference>
<dbReference type="EMBL" id="BC007650">
    <property type="protein sequence ID" value="AAH07650.1"/>
    <property type="molecule type" value="mRNA"/>
</dbReference>
<dbReference type="EMBL" id="BC022789">
    <property type="protein sequence ID" value="AAH22789.1"/>
    <property type="molecule type" value="mRNA"/>
</dbReference>
<dbReference type="CCDS" id="CCDS3956.1"/>
<dbReference type="RefSeq" id="NP_057030.3">
    <property type="nucleotide sequence ID" value="NM_015946.4"/>
</dbReference>
<dbReference type="PDB" id="1X52">
    <property type="method" value="NMR"/>
    <property type="chains" value="A=261-371"/>
</dbReference>
<dbReference type="PDB" id="5EO3">
    <property type="method" value="X-ray"/>
    <property type="resolution" value="2.60 A"/>
    <property type="chains" value="A/B=265-385"/>
</dbReference>
<dbReference type="PDB" id="5LZW">
    <property type="method" value="EM"/>
    <property type="resolution" value="3.53 A"/>
    <property type="chains" value="ii=1-385"/>
</dbReference>
<dbReference type="PDB" id="5LZX">
    <property type="method" value="EM"/>
    <property type="resolution" value="3.67 A"/>
    <property type="chains" value="ii=1-385"/>
</dbReference>
<dbReference type="PDB" id="5LZY">
    <property type="method" value="EM"/>
    <property type="resolution" value="3.99 A"/>
    <property type="chains" value="ii=1-385"/>
</dbReference>
<dbReference type="PDB" id="5LZZ">
    <property type="method" value="EM"/>
    <property type="resolution" value="3.47 A"/>
    <property type="chains" value="ii=1-385"/>
</dbReference>
<dbReference type="PDBsum" id="1X52"/>
<dbReference type="PDBsum" id="5EO3"/>
<dbReference type="PDBsum" id="5LZW"/>
<dbReference type="PDBsum" id="5LZX"/>
<dbReference type="PDBsum" id="5LZY"/>
<dbReference type="PDBsum" id="5LZZ"/>
<dbReference type="EMDB" id="EMD-4134"/>
<dbReference type="EMDB" id="EMD-4135"/>
<dbReference type="EMDB" id="EMD-4136"/>
<dbReference type="EMDB" id="EMD-4137"/>
<dbReference type="SMR" id="Q9BRX2"/>
<dbReference type="BioGRID" id="119818">
    <property type="interactions" value="189"/>
</dbReference>
<dbReference type="FunCoup" id="Q9BRX2">
    <property type="interactions" value="866"/>
</dbReference>
<dbReference type="IntAct" id="Q9BRX2">
    <property type="interactions" value="71"/>
</dbReference>
<dbReference type="MINT" id="Q9BRX2"/>
<dbReference type="STRING" id="9606.ENSP00000274311"/>
<dbReference type="GlyGen" id="Q9BRX2">
    <property type="glycosylation" value="1 site, 1 O-linked glycan (1 site)"/>
</dbReference>
<dbReference type="iPTMnet" id="Q9BRX2"/>
<dbReference type="MetOSite" id="Q9BRX2"/>
<dbReference type="PhosphoSitePlus" id="Q9BRX2"/>
<dbReference type="BioMuta" id="PELO"/>
<dbReference type="DMDM" id="322510057"/>
<dbReference type="jPOST" id="Q9BRX2"/>
<dbReference type="MassIVE" id="Q9BRX2"/>
<dbReference type="PaxDb" id="9606-ENSP00000274311"/>
<dbReference type="PeptideAtlas" id="Q9BRX2"/>
<dbReference type="ProteomicsDB" id="78846"/>
<dbReference type="Pumba" id="Q9BRX2"/>
<dbReference type="Antibodypedia" id="23309">
    <property type="antibodies" value="157 antibodies from 25 providers"/>
</dbReference>
<dbReference type="DNASU" id="53918"/>
<dbReference type="Ensembl" id="ENST00000274311.3">
    <property type="protein sequence ID" value="ENSP00000274311.2"/>
    <property type="gene ID" value="ENSG00000152684.11"/>
</dbReference>
<dbReference type="GeneID" id="53918"/>
<dbReference type="KEGG" id="hsa:53918"/>
<dbReference type="MANE-Select" id="ENST00000274311.3">
    <property type="protein sequence ID" value="ENSP00000274311.2"/>
    <property type="RefSeq nucleotide sequence ID" value="NM_015946.5"/>
    <property type="RefSeq protein sequence ID" value="NP_057030.3"/>
</dbReference>
<dbReference type="UCSC" id="uc003jos.5">
    <property type="organism name" value="human"/>
</dbReference>
<dbReference type="AGR" id="HGNC:8829"/>
<dbReference type="CTD" id="53918"/>
<dbReference type="DisGeNET" id="53918"/>
<dbReference type="GeneCards" id="PELO"/>
<dbReference type="HGNC" id="HGNC:8829">
    <property type="gene designation" value="PELO"/>
</dbReference>
<dbReference type="HPA" id="ENSG00000152684">
    <property type="expression patterns" value="Low tissue specificity"/>
</dbReference>
<dbReference type="MIM" id="605757">
    <property type="type" value="gene"/>
</dbReference>
<dbReference type="neXtProt" id="NX_Q9BRX2"/>
<dbReference type="OpenTargets" id="ENSG00000152684"/>
<dbReference type="PharmGKB" id="PA33174"/>
<dbReference type="VEuPathDB" id="HostDB:ENSG00000152684"/>
<dbReference type="eggNOG" id="KOG2869">
    <property type="taxonomic scope" value="Eukaryota"/>
</dbReference>
<dbReference type="GeneTree" id="ENSGT00390000016326"/>
<dbReference type="HOGENOM" id="CLU_023334_3_1_1"/>
<dbReference type="InParanoid" id="Q9BRX2"/>
<dbReference type="OMA" id="DDLWHLK"/>
<dbReference type="OrthoDB" id="10249111at2759"/>
<dbReference type="PAN-GO" id="Q9BRX2">
    <property type="GO annotations" value="4 GO annotations based on evolutionary models"/>
</dbReference>
<dbReference type="PhylomeDB" id="Q9BRX2"/>
<dbReference type="TreeFam" id="TF105733"/>
<dbReference type="PathwayCommons" id="Q9BRX2"/>
<dbReference type="SignaLink" id="Q9BRX2"/>
<dbReference type="BioGRID-ORCS" id="53918">
    <property type="hits" value="618 hits in 1167 CRISPR screens"/>
</dbReference>
<dbReference type="CD-CODE" id="91857CE7">
    <property type="entry name" value="Nucleolus"/>
</dbReference>
<dbReference type="CD-CODE" id="DEE660B4">
    <property type="entry name" value="Stress granule"/>
</dbReference>
<dbReference type="EvolutionaryTrace" id="Q9BRX2"/>
<dbReference type="GeneWiki" id="PELO"/>
<dbReference type="GenomeRNAi" id="53918"/>
<dbReference type="Pharos" id="Q9BRX2">
    <property type="development level" value="Tbio"/>
</dbReference>
<dbReference type="PRO" id="PR:Q9BRX2"/>
<dbReference type="Proteomes" id="UP000005640">
    <property type="component" value="Chromosome 5"/>
</dbReference>
<dbReference type="RNAct" id="Q9BRX2">
    <property type="molecule type" value="protein"/>
</dbReference>
<dbReference type="Bgee" id="ENSG00000152684">
    <property type="expression patterns" value="Expressed in vena cava and 197 other cell types or tissues"/>
</dbReference>
<dbReference type="GO" id="GO:0005737">
    <property type="term" value="C:cytoplasm"/>
    <property type="evidence" value="ECO:0000318"/>
    <property type="project" value="GO_Central"/>
</dbReference>
<dbReference type="GO" id="GO:0022626">
    <property type="term" value="C:cytosolic ribosome"/>
    <property type="evidence" value="ECO:0000314"/>
    <property type="project" value="UniProt"/>
</dbReference>
<dbReference type="GO" id="GO:1990533">
    <property type="term" value="C:Dom34-Hbs1 complex"/>
    <property type="evidence" value="ECO:0000314"/>
    <property type="project" value="UniProtKB"/>
</dbReference>
<dbReference type="GO" id="GO:0046872">
    <property type="term" value="F:metal ion binding"/>
    <property type="evidence" value="ECO:0007669"/>
    <property type="project" value="UniProtKB-KW"/>
</dbReference>
<dbReference type="GO" id="GO:0060589">
    <property type="term" value="F:nucleoside-triphosphatase regulator activity"/>
    <property type="evidence" value="ECO:0000314"/>
    <property type="project" value="UniProt"/>
</dbReference>
<dbReference type="GO" id="GO:0043022">
    <property type="term" value="F:ribosome binding"/>
    <property type="evidence" value="ECO:0000314"/>
    <property type="project" value="UniProtKB"/>
</dbReference>
<dbReference type="GO" id="GO:0170011">
    <property type="term" value="F:stalled ribosome sensor activity"/>
    <property type="evidence" value="ECO:0000314"/>
    <property type="project" value="UniProt"/>
</dbReference>
<dbReference type="GO" id="GO:0051301">
    <property type="term" value="P:cell division"/>
    <property type="evidence" value="ECO:0007669"/>
    <property type="project" value="UniProtKB-KW"/>
</dbReference>
<dbReference type="GO" id="GO:0051276">
    <property type="term" value="P:chromosome organization"/>
    <property type="evidence" value="ECO:0007669"/>
    <property type="project" value="Ensembl"/>
</dbReference>
<dbReference type="GO" id="GO:0007492">
    <property type="term" value="P:endoderm development"/>
    <property type="evidence" value="ECO:0007669"/>
    <property type="project" value="Ensembl"/>
</dbReference>
<dbReference type="GO" id="GO:0001833">
    <property type="term" value="P:inner cell mass cell proliferation"/>
    <property type="evidence" value="ECO:0007669"/>
    <property type="project" value="Ensembl"/>
</dbReference>
<dbReference type="GO" id="GO:0060231">
    <property type="term" value="P:mesenchymal to epithelial transition"/>
    <property type="evidence" value="ECO:0007669"/>
    <property type="project" value="Ensembl"/>
</dbReference>
<dbReference type="GO" id="GO:0070651">
    <property type="term" value="P:nonfunctional rRNA decay"/>
    <property type="evidence" value="ECO:0000318"/>
    <property type="project" value="GO_Central"/>
</dbReference>
<dbReference type="GO" id="GO:0070966">
    <property type="term" value="P:nuclear-transcribed mRNA catabolic process, no-go decay"/>
    <property type="evidence" value="ECO:0000314"/>
    <property type="project" value="UniProtKB"/>
</dbReference>
<dbReference type="GO" id="GO:0070481">
    <property type="term" value="P:nuclear-transcribed mRNA catabolic process, non-stop decay"/>
    <property type="evidence" value="ECO:0007669"/>
    <property type="project" value="InterPro"/>
</dbReference>
<dbReference type="GO" id="GO:0030513">
    <property type="term" value="P:positive regulation of BMP signaling pathway"/>
    <property type="evidence" value="ECO:0007669"/>
    <property type="project" value="Ensembl"/>
</dbReference>
<dbReference type="GO" id="GO:0006417">
    <property type="term" value="P:regulation of translation"/>
    <property type="evidence" value="ECO:0007669"/>
    <property type="project" value="UniProtKB-KW"/>
</dbReference>
<dbReference type="GO" id="GO:0072344">
    <property type="term" value="P:rescue of stalled ribosome"/>
    <property type="evidence" value="ECO:0000314"/>
    <property type="project" value="UniProtKB"/>
</dbReference>
<dbReference type="GO" id="GO:0032790">
    <property type="term" value="P:ribosome disassembly"/>
    <property type="evidence" value="ECO:0000314"/>
    <property type="project" value="UniProtKB"/>
</dbReference>
<dbReference type="GO" id="GO:0071025">
    <property type="term" value="P:RNA surveillance"/>
    <property type="evidence" value="ECO:0007669"/>
    <property type="project" value="InterPro"/>
</dbReference>
<dbReference type="GO" id="GO:0019827">
    <property type="term" value="P:stem cell population maintenance"/>
    <property type="evidence" value="ECO:0007669"/>
    <property type="project" value="Ensembl"/>
</dbReference>
<dbReference type="FunFam" id="2.30.30.870:FF:000001">
    <property type="entry name" value="Protein pelota homolog"/>
    <property type="match status" value="1"/>
</dbReference>
<dbReference type="FunFam" id="3.30.1330.30:FF:000008">
    <property type="entry name" value="Protein pelota homolog"/>
    <property type="match status" value="1"/>
</dbReference>
<dbReference type="FunFam" id="3.30.420.60:FF:000002">
    <property type="entry name" value="Protein pelota homolog"/>
    <property type="match status" value="1"/>
</dbReference>
<dbReference type="Gene3D" id="3.30.1330.30">
    <property type="match status" value="1"/>
</dbReference>
<dbReference type="Gene3D" id="3.30.420.60">
    <property type="entry name" value="eRF1 domain 2"/>
    <property type="match status" value="1"/>
</dbReference>
<dbReference type="Gene3D" id="2.30.30.870">
    <property type="entry name" value="Pelota, domain A"/>
    <property type="match status" value="1"/>
</dbReference>
<dbReference type="InterPro" id="IPR042226">
    <property type="entry name" value="eFR1_2_sf"/>
</dbReference>
<dbReference type="InterPro" id="IPR005140">
    <property type="entry name" value="eRF1_1_Pelota"/>
</dbReference>
<dbReference type="InterPro" id="IPR005141">
    <property type="entry name" value="eRF1_2"/>
</dbReference>
<dbReference type="InterPro" id="IPR005142">
    <property type="entry name" value="eRF1_3"/>
</dbReference>
<dbReference type="InterPro" id="IPR038069">
    <property type="entry name" value="Pelota/DOM34_N"/>
</dbReference>
<dbReference type="InterPro" id="IPR029064">
    <property type="entry name" value="Ribosomal_eL30-like_sf"/>
</dbReference>
<dbReference type="InterPro" id="IPR004405">
    <property type="entry name" value="Transl-rel_pelota"/>
</dbReference>
<dbReference type="NCBIfam" id="TIGR00111">
    <property type="entry name" value="pelota"/>
    <property type="match status" value="1"/>
</dbReference>
<dbReference type="PANTHER" id="PTHR10853">
    <property type="entry name" value="PELOTA"/>
    <property type="match status" value="1"/>
</dbReference>
<dbReference type="PANTHER" id="PTHR10853:SF0">
    <property type="entry name" value="PROTEIN PELOTA HOMOLOG"/>
    <property type="match status" value="1"/>
</dbReference>
<dbReference type="Pfam" id="PF03463">
    <property type="entry name" value="eRF1_1"/>
    <property type="match status" value="1"/>
</dbReference>
<dbReference type="Pfam" id="PF03464">
    <property type="entry name" value="eRF1_2"/>
    <property type="match status" value="1"/>
</dbReference>
<dbReference type="Pfam" id="PF03465">
    <property type="entry name" value="eRF1_3"/>
    <property type="match status" value="1"/>
</dbReference>
<dbReference type="SMART" id="SM01194">
    <property type="entry name" value="eRF1_1"/>
    <property type="match status" value="1"/>
</dbReference>
<dbReference type="SUPFAM" id="SSF159065">
    <property type="entry name" value="Dom34/Pelota N-terminal domain-like"/>
    <property type="match status" value="1"/>
</dbReference>
<dbReference type="SUPFAM" id="SSF55315">
    <property type="entry name" value="L30e-like"/>
    <property type="match status" value="1"/>
</dbReference>
<dbReference type="SUPFAM" id="SSF53137">
    <property type="entry name" value="Translational machinery components"/>
    <property type="match status" value="1"/>
</dbReference>
<protein>
    <recommendedName>
        <fullName evidence="13">Protein pelota homolog</fullName>
        <shortName evidence="15">hPelota</shortName>
    </recommendedName>
    <alternativeName>
        <fullName evidence="14">Protein Dom34 homolog</fullName>
    </alternativeName>
</protein>
<accession>Q9BRX2</accession>
<accession>Q9GZS6</accession>
<accession>Q9Y306</accession>